<evidence type="ECO:0000250" key="1"/>
<evidence type="ECO:0000250" key="2">
    <source>
        <dbReference type="UniProtKB" id="Q4KLJ8"/>
    </source>
</evidence>
<evidence type="ECO:0000250" key="3">
    <source>
        <dbReference type="UniProtKB" id="Q9H2J4"/>
    </source>
</evidence>
<evidence type="ECO:0000255" key="4"/>
<evidence type="ECO:0000305" key="5"/>
<dbReference type="EMBL" id="CR858776">
    <property type="protein sequence ID" value="CAH90983.1"/>
    <property type="molecule type" value="mRNA"/>
</dbReference>
<dbReference type="RefSeq" id="NP_001125567.1">
    <property type="nucleotide sequence ID" value="NM_001132095.1"/>
</dbReference>
<dbReference type="BMRB" id="Q5RB77"/>
<dbReference type="SMR" id="Q5RB77"/>
<dbReference type="FunCoup" id="Q5RB77">
    <property type="interactions" value="3397"/>
</dbReference>
<dbReference type="STRING" id="9601.ENSPPYP00000013491"/>
<dbReference type="GeneID" id="100172481"/>
<dbReference type="KEGG" id="pon:100172481"/>
<dbReference type="CTD" id="79031"/>
<dbReference type="InParanoid" id="Q5RB77"/>
<dbReference type="OrthoDB" id="45518at2759"/>
<dbReference type="Proteomes" id="UP000001595">
    <property type="component" value="Unplaced"/>
</dbReference>
<dbReference type="GO" id="GO:0005783">
    <property type="term" value="C:endoplasmic reticulum"/>
    <property type="evidence" value="ECO:0007669"/>
    <property type="project" value="UniProtKB-SubCell"/>
</dbReference>
<dbReference type="GO" id="GO:0048471">
    <property type="term" value="C:perinuclear region of cytoplasm"/>
    <property type="evidence" value="ECO:0007669"/>
    <property type="project" value="UniProtKB-SubCell"/>
</dbReference>
<dbReference type="GO" id="GO:0044183">
    <property type="term" value="F:protein folding chaperone"/>
    <property type="evidence" value="ECO:0007669"/>
    <property type="project" value="TreeGrafter"/>
</dbReference>
<dbReference type="GO" id="GO:0043184">
    <property type="term" value="F:vascular endothelial growth factor receptor 2 binding"/>
    <property type="evidence" value="ECO:0007669"/>
    <property type="project" value="TreeGrafter"/>
</dbReference>
<dbReference type="GO" id="GO:0001525">
    <property type="term" value="P:angiogenesis"/>
    <property type="evidence" value="ECO:0007669"/>
    <property type="project" value="UniProtKB-KW"/>
</dbReference>
<dbReference type="GO" id="GO:0006915">
    <property type="term" value="P:apoptotic process"/>
    <property type="evidence" value="ECO:0007669"/>
    <property type="project" value="UniProtKB-KW"/>
</dbReference>
<dbReference type="GO" id="GO:0010628">
    <property type="term" value="P:positive regulation of gene expression"/>
    <property type="evidence" value="ECO:0007669"/>
    <property type="project" value="TreeGrafter"/>
</dbReference>
<dbReference type="CDD" id="cd02988">
    <property type="entry name" value="Phd_like_VIAF"/>
    <property type="match status" value="1"/>
</dbReference>
<dbReference type="FunFam" id="3.40.30.10:FF:000081">
    <property type="entry name" value="phosducin-like protein 3"/>
    <property type="match status" value="1"/>
</dbReference>
<dbReference type="Gene3D" id="3.40.30.10">
    <property type="entry name" value="Glutaredoxin"/>
    <property type="match status" value="1"/>
</dbReference>
<dbReference type="InterPro" id="IPR051498">
    <property type="entry name" value="Phosducin-like_chap/apop_reg"/>
</dbReference>
<dbReference type="InterPro" id="IPR024253">
    <property type="entry name" value="Phosducin_thioredoxin-like_dom"/>
</dbReference>
<dbReference type="InterPro" id="IPR036249">
    <property type="entry name" value="Thioredoxin-like_sf"/>
</dbReference>
<dbReference type="NCBIfam" id="TIGR01552">
    <property type="entry name" value="phd_fam"/>
    <property type="match status" value="1"/>
</dbReference>
<dbReference type="PANTHER" id="PTHR45809:SF4">
    <property type="entry name" value="PHOSDUCIN-LIKE PROTEIN 3"/>
    <property type="match status" value="1"/>
</dbReference>
<dbReference type="PANTHER" id="PTHR45809">
    <property type="entry name" value="VIRAL IAP-ASSOCIATED FACTOR HOMOLOG"/>
    <property type="match status" value="1"/>
</dbReference>
<dbReference type="Pfam" id="PF02114">
    <property type="entry name" value="Phosducin"/>
    <property type="match status" value="1"/>
</dbReference>
<dbReference type="SUPFAM" id="SSF52833">
    <property type="entry name" value="Thioredoxin-like"/>
    <property type="match status" value="1"/>
</dbReference>
<feature type="chain" id="PRO_0000246159" description="Phosducin-like protein 3">
    <location>
        <begin position="1"/>
        <end position="239"/>
    </location>
</feature>
<feature type="domain" description="Phosducin" evidence="4">
    <location>
        <begin position="32"/>
        <end position="180"/>
    </location>
</feature>
<feature type="region of interest" description="Thioredoxin fold" evidence="1">
    <location>
        <begin position="91"/>
        <end position="239"/>
    </location>
</feature>
<feature type="modified residue" description="N-acetylmethionine" evidence="3">
    <location>
        <position position="1"/>
    </location>
</feature>
<feature type="modified residue" description="Phosphoserine" evidence="3">
    <location>
        <position position="43"/>
    </location>
</feature>
<feature type="modified residue" description="Phosphoserine" evidence="3">
    <location>
        <position position="234"/>
    </location>
</feature>
<feature type="modified residue" description="Phosphoserine" evidence="3">
    <location>
        <position position="236"/>
    </location>
</feature>
<protein>
    <recommendedName>
        <fullName>Phosducin-like protein 3</fullName>
    </recommendedName>
</protein>
<sequence length="239" mass="27572">MQDPNADTEWNDILRKKGILPPKESLKELEEEAEEEQRILQQSVVKTYEDMTLEELDDHEDEFNEEDERAIEMYRRQRLAEWKVTKLKNKFGEVLEISGKDYVQEVTKAGEGLWVILHLYKQGIPLCALINQHLSGLARKFPDVKFIKAISTTCIPNYPDRNLPTIFVYLEGDIKAQFIGPLVFGGMNLTRDELEWKLSESGAIMTDLEENPKKPIEDVLLSSVRRSALMKRDSDSEGD</sequence>
<proteinExistence type="evidence at transcript level"/>
<gene>
    <name type="primary">PDCL3</name>
</gene>
<accession>Q5RB77</accession>
<name>PDCL3_PONAB</name>
<organism>
    <name type="scientific">Pongo abelii</name>
    <name type="common">Sumatran orangutan</name>
    <name type="synonym">Pongo pygmaeus abelii</name>
    <dbReference type="NCBI Taxonomy" id="9601"/>
    <lineage>
        <taxon>Eukaryota</taxon>
        <taxon>Metazoa</taxon>
        <taxon>Chordata</taxon>
        <taxon>Craniata</taxon>
        <taxon>Vertebrata</taxon>
        <taxon>Euteleostomi</taxon>
        <taxon>Mammalia</taxon>
        <taxon>Eutheria</taxon>
        <taxon>Euarchontoglires</taxon>
        <taxon>Primates</taxon>
        <taxon>Haplorrhini</taxon>
        <taxon>Catarrhini</taxon>
        <taxon>Hominidae</taxon>
        <taxon>Pongo</taxon>
    </lineage>
</organism>
<reference key="1">
    <citation type="submission" date="2004-11" db="EMBL/GenBank/DDBJ databases">
        <authorList>
            <consortium name="The German cDNA consortium"/>
        </authorList>
    </citation>
    <scope>NUCLEOTIDE SEQUENCE [LARGE SCALE MRNA]</scope>
    <source>
        <tissue>Kidney</tissue>
    </source>
</reference>
<keyword id="KW-0007">Acetylation</keyword>
<keyword id="KW-0037">Angiogenesis</keyword>
<keyword id="KW-0053">Apoptosis</keyword>
<keyword id="KW-0143">Chaperone</keyword>
<keyword id="KW-0963">Cytoplasm</keyword>
<keyword id="KW-0256">Endoplasmic reticulum</keyword>
<keyword id="KW-0945">Host-virus interaction</keyword>
<keyword id="KW-0597">Phosphoprotein</keyword>
<keyword id="KW-1185">Reference proteome</keyword>
<comment type="function">
    <text evidence="2 3">Acts as a chaperone for the angiogenic VEGF receptor KDR/VEGFR2, increasing its abundance by inhibiting its ubiquitination and degradation (By similarity). Inhibits the folding activity of the chaperonin-containing T-complex (CCT) which leads to inhibition of cytoskeletal actin folding (By similarity). Acts as a chaperone during heat shock alongside HSP90 and HSP40/70 chaperone complexes (By similarity). Modulates the activation of caspases during apoptosis (By similarity).</text>
</comment>
<comment type="subunit">
    <text evidence="2 3">Interacts (via thioredoxin fold region) with KDR/VEGFR2 (via juxtamembrane domain) (By similarity). Forms ternary complexes with the chaperonin CCT complex and actin substrate, leading to inhibition of actin folding (By similarity). Interacts with XIAP (via BIR 3 and RING domain) (By similarity). Interacts with HSP90AA1 and HSP90AB1 (By similarity).</text>
</comment>
<comment type="subcellular location">
    <subcellularLocation>
        <location evidence="3">Cytoplasm</location>
    </subcellularLocation>
    <subcellularLocation>
        <location evidence="3">Cytoplasm</location>
        <location evidence="3">Perinuclear region</location>
    </subcellularLocation>
    <subcellularLocation>
        <location evidence="3">Endoplasmic reticulum</location>
    </subcellularLocation>
</comment>
<comment type="PTM">
    <text evidence="3">N-terminal methionine acetylation destabilizes the protein.</text>
</comment>
<comment type="similarity">
    <text evidence="5">Belongs to the phosducin family.</text>
</comment>